<organism>
    <name type="scientific">Saccharomyces cerevisiae (strain ATCC 204508 / S288c)</name>
    <name type="common">Baker's yeast</name>
    <dbReference type="NCBI Taxonomy" id="559292"/>
    <lineage>
        <taxon>Eukaryota</taxon>
        <taxon>Fungi</taxon>
        <taxon>Dikarya</taxon>
        <taxon>Ascomycota</taxon>
        <taxon>Saccharomycotina</taxon>
        <taxon>Saccharomycetes</taxon>
        <taxon>Saccharomycetales</taxon>
        <taxon>Saccharomycetaceae</taxon>
        <taxon>Saccharomyces</taxon>
    </lineage>
</organism>
<gene>
    <name type="primary">REE1</name>
    <name type="ordered locus">YJL217W</name>
    <name type="ORF">HRC198</name>
    <name type="ORF">J0226</name>
</gene>
<name>REE1_YEAST</name>
<proteinExistence type="evidence at protein level"/>
<dbReference type="EMBL" id="Z34098">
    <property type="protein sequence ID" value="CAA83993.1"/>
    <property type="molecule type" value="Genomic_DNA"/>
</dbReference>
<dbReference type="EMBL" id="Z49492">
    <property type="protein sequence ID" value="CAA89514.1"/>
    <property type="molecule type" value="Genomic_DNA"/>
</dbReference>
<dbReference type="EMBL" id="AY558254">
    <property type="protein sequence ID" value="AAS56580.1"/>
    <property type="molecule type" value="Genomic_DNA"/>
</dbReference>
<dbReference type="EMBL" id="BK006943">
    <property type="protein sequence ID" value="DAA08595.1"/>
    <property type="molecule type" value="Genomic_DNA"/>
</dbReference>
<dbReference type="PIR" id="S50710">
    <property type="entry name" value="S50710"/>
</dbReference>
<dbReference type="RefSeq" id="NP_012318.1">
    <property type="nucleotide sequence ID" value="NM_001181650.1"/>
</dbReference>
<dbReference type="PDB" id="3O12">
    <property type="method" value="X-ray"/>
    <property type="resolution" value="1.50 A"/>
    <property type="chains" value="A=1-198"/>
</dbReference>
<dbReference type="PDBsum" id="3O12"/>
<dbReference type="SMR" id="P40893"/>
<dbReference type="BioGRID" id="33564">
    <property type="interactions" value="54"/>
</dbReference>
<dbReference type="FunCoup" id="P40893">
    <property type="interactions" value="51"/>
</dbReference>
<dbReference type="IntAct" id="P40893">
    <property type="interactions" value="2"/>
</dbReference>
<dbReference type="MINT" id="P40893"/>
<dbReference type="STRING" id="4932.YJL217W"/>
<dbReference type="iPTMnet" id="P40893"/>
<dbReference type="PaxDb" id="4932-YJL217W"/>
<dbReference type="PeptideAtlas" id="P40893"/>
<dbReference type="DNASU" id="853238"/>
<dbReference type="EnsemblFungi" id="YJL217W_mRNA">
    <property type="protein sequence ID" value="YJL217W"/>
    <property type="gene ID" value="YJL217W"/>
</dbReference>
<dbReference type="GeneID" id="853238"/>
<dbReference type="KEGG" id="sce:YJL217W"/>
<dbReference type="AGR" id="SGD:S000003753"/>
<dbReference type="SGD" id="S000003753">
    <property type="gene designation" value="REE1"/>
</dbReference>
<dbReference type="VEuPathDB" id="FungiDB:YJL217W"/>
<dbReference type="eggNOG" id="ENOG502RZMY">
    <property type="taxonomic scope" value="Eukaryota"/>
</dbReference>
<dbReference type="GeneTree" id="ENSGT00390000013865"/>
<dbReference type="HOGENOM" id="CLU_082825_0_0_1"/>
<dbReference type="InParanoid" id="P40893"/>
<dbReference type="OMA" id="THYGFIR"/>
<dbReference type="OrthoDB" id="42525at2759"/>
<dbReference type="BioCyc" id="YEAST:G3O-31642-MONOMER"/>
<dbReference type="BioGRID-ORCS" id="853238">
    <property type="hits" value="2 hits in 10 CRISPR screens"/>
</dbReference>
<dbReference type="EvolutionaryTrace" id="P40893"/>
<dbReference type="PRO" id="PR:P40893"/>
<dbReference type="Proteomes" id="UP000002311">
    <property type="component" value="Chromosome X"/>
</dbReference>
<dbReference type="RNAct" id="P40893">
    <property type="molecule type" value="protein"/>
</dbReference>
<dbReference type="GO" id="GO:0005737">
    <property type="term" value="C:cytoplasm"/>
    <property type="evidence" value="ECO:0007005"/>
    <property type="project" value="SGD"/>
</dbReference>
<dbReference type="FunFam" id="2.60.120.200:FF:000437">
    <property type="entry name" value="EC1118_1J11_0133p"/>
    <property type="match status" value="1"/>
</dbReference>
<dbReference type="Gene3D" id="2.60.120.200">
    <property type="match status" value="1"/>
</dbReference>
<dbReference type="InterPro" id="IPR013320">
    <property type="entry name" value="ConA-like_dom_sf"/>
</dbReference>
<dbReference type="InterPro" id="IPR009784">
    <property type="entry name" value="DUF1349"/>
</dbReference>
<dbReference type="InterPro" id="IPR015987">
    <property type="entry name" value="UCP022704"/>
</dbReference>
<dbReference type="PANTHER" id="PTHR35332">
    <property type="entry name" value="REGULATION OF ENOLASE PROTEIN 1"/>
    <property type="match status" value="1"/>
</dbReference>
<dbReference type="PANTHER" id="PTHR35332:SF2">
    <property type="entry name" value="REGULATION OF ENOLASE PROTEIN 1"/>
    <property type="match status" value="1"/>
</dbReference>
<dbReference type="Pfam" id="PF07081">
    <property type="entry name" value="DUF1349"/>
    <property type="match status" value="1"/>
</dbReference>
<dbReference type="PIRSF" id="PIRSF022704">
    <property type="entry name" value="UCP022704"/>
    <property type="match status" value="1"/>
</dbReference>
<dbReference type="SUPFAM" id="SSF49899">
    <property type="entry name" value="Concanavalin A-like lectins/glucanases"/>
    <property type="match status" value="1"/>
</dbReference>
<keyword id="KW-0002">3D-structure</keyword>
<keyword id="KW-0963">Cytoplasm</keyword>
<keyword id="KW-1185">Reference proteome</keyword>
<reference key="1">
    <citation type="journal article" date="1994" name="Yeast">
        <title>Sequence analysis of a 40.2 kb DNA fragment located near the left telomere of yeast chromosome X.</title>
        <authorList>
            <person name="Vandenbol M."/>
            <person name="Durand P."/>
            <person name="Bolle P.-A."/>
            <person name="Dion C."/>
            <person name="Portetelle D."/>
            <person name="Hilger F."/>
        </authorList>
    </citation>
    <scope>NUCLEOTIDE SEQUENCE [GENOMIC DNA]</scope>
    <source>
        <strain>ATCC 204508 / S288c</strain>
    </source>
</reference>
<reference key="2">
    <citation type="journal article" date="1996" name="EMBO J.">
        <title>Complete nucleotide sequence of Saccharomyces cerevisiae chromosome X.</title>
        <authorList>
            <person name="Galibert F."/>
            <person name="Alexandraki D."/>
            <person name="Baur A."/>
            <person name="Boles E."/>
            <person name="Chalwatzis N."/>
            <person name="Chuat J.-C."/>
            <person name="Coster F."/>
            <person name="Cziepluch C."/>
            <person name="de Haan M."/>
            <person name="Domdey H."/>
            <person name="Durand P."/>
            <person name="Entian K.-D."/>
            <person name="Gatius M."/>
            <person name="Goffeau A."/>
            <person name="Grivell L.A."/>
            <person name="Hennemann A."/>
            <person name="Herbert C.J."/>
            <person name="Heumann K."/>
            <person name="Hilger F."/>
            <person name="Hollenberg C.P."/>
            <person name="Huang M.-E."/>
            <person name="Jacq C."/>
            <person name="Jauniaux J.-C."/>
            <person name="Katsoulou C."/>
            <person name="Kirchrath L."/>
            <person name="Kleine K."/>
            <person name="Kordes E."/>
            <person name="Koetter P."/>
            <person name="Liebl S."/>
            <person name="Louis E.J."/>
            <person name="Manus V."/>
            <person name="Mewes H.-W."/>
            <person name="Miosga T."/>
            <person name="Obermaier B."/>
            <person name="Perea J."/>
            <person name="Pohl T.M."/>
            <person name="Portetelle D."/>
            <person name="Pujol A."/>
            <person name="Purnelle B."/>
            <person name="Ramezani Rad M."/>
            <person name="Rasmussen S.W."/>
            <person name="Rose M."/>
            <person name="Rossau R."/>
            <person name="Schaaff-Gerstenschlaeger I."/>
            <person name="Smits P.H.M."/>
            <person name="Scarcez T."/>
            <person name="Soriano N."/>
            <person name="To Van D."/>
            <person name="Tzermia M."/>
            <person name="Van Broekhoven A."/>
            <person name="Vandenbol M."/>
            <person name="Wedler H."/>
            <person name="von Wettstein D."/>
            <person name="Wambutt R."/>
            <person name="Zagulski M."/>
            <person name="Zollner A."/>
            <person name="Karpfinger-Hartl L."/>
        </authorList>
    </citation>
    <scope>NUCLEOTIDE SEQUENCE [LARGE SCALE GENOMIC DNA]</scope>
    <source>
        <strain>ATCC 204508 / S288c</strain>
    </source>
</reference>
<reference key="3">
    <citation type="journal article" date="2014" name="G3 (Bethesda)">
        <title>The reference genome sequence of Saccharomyces cerevisiae: Then and now.</title>
        <authorList>
            <person name="Engel S.R."/>
            <person name="Dietrich F.S."/>
            <person name="Fisk D.G."/>
            <person name="Binkley G."/>
            <person name="Balakrishnan R."/>
            <person name="Costanzo M.C."/>
            <person name="Dwight S.S."/>
            <person name="Hitz B.C."/>
            <person name="Karra K."/>
            <person name="Nash R.S."/>
            <person name="Weng S."/>
            <person name="Wong E.D."/>
            <person name="Lloyd P."/>
            <person name="Skrzypek M.S."/>
            <person name="Miyasato S.R."/>
            <person name="Simison M."/>
            <person name="Cherry J.M."/>
        </authorList>
    </citation>
    <scope>GENOME REANNOTATION</scope>
    <source>
        <strain>ATCC 204508 / S288c</strain>
    </source>
</reference>
<reference key="4">
    <citation type="journal article" date="2007" name="Genome Res.">
        <title>Approaching a complete repository of sequence-verified protein-encoding clones for Saccharomyces cerevisiae.</title>
        <authorList>
            <person name="Hu Y."/>
            <person name="Rolfs A."/>
            <person name="Bhullar B."/>
            <person name="Murthy T.V.S."/>
            <person name="Zhu C."/>
            <person name="Berger M.F."/>
            <person name="Camargo A.A."/>
            <person name="Kelley F."/>
            <person name="McCarron S."/>
            <person name="Jepson D."/>
            <person name="Richardson A."/>
            <person name="Raphael J."/>
            <person name="Moreira D."/>
            <person name="Taycher E."/>
            <person name="Zuo D."/>
            <person name="Mohr S."/>
            <person name="Kane M.F."/>
            <person name="Williamson J."/>
            <person name="Simpson A.J.G."/>
            <person name="Bulyk M.L."/>
            <person name="Harlow E."/>
            <person name="Marsischky G."/>
            <person name="Kolodner R.D."/>
            <person name="LaBaer J."/>
        </authorList>
    </citation>
    <scope>NUCLEOTIDE SEQUENCE [GENOMIC DNA]</scope>
    <source>
        <strain>ATCC 204508 / S288c</strain>
    </source>
</reference>
<reference key="5">
    <citation type="journal article" date="2000" name="J. Biol. Chem.">
        <title>Identification of the copper regulon in Saccharomyces cerevisiae by DNA microarrays.</title>
        <authorList>
            <person name="Gross C."/>
            <person name="Kelleher M."/>
            <person name="Iyer V.R."/>
            <person name="Brown P.O."/>
            <person name="Winge D.R."/>
        </authorList>
    </citation>
    <scope>INDUCTION</scope>
</reference>
<reference key="6">
    <citation type="journal article" date="2002" name="Cell Calcium">
        <title>Genome-wide analysis of yeast transcription upon calcium shortage.</title>
        <authorList>
            <person name="Lombardia L.J."/>
            <person name="Becerra M."/>
            <person name="Rodriguez-Belmonte E."/>
            <person name="Hauser N.C."/>
            <person name="Cerdan M.E."/>
        </authorList>
    </citation>
    <scope>INDUCTION</scope>
</reference>
<reference key="7">
    <citation type="journal article" date="2003" name="Nature">
        <title>Global analysis of protein localization in budding yeast.</title>
        <authorList>
            <person name="Huh W.-K."/>
            <person name="Falvo J.V."/>
            <person name="Gerke L.C."/>
            <person name="Carroll A.S."/>
            <person name="Howson R.W."/>
            <person name="Weissman J.S."/>
            <person name="O'Shea E.K."/>
        </authorList>
    </citation>
    <scope>SUBCELLULAR LOCATION [LARGE SCALE ANALYSIS]</scope>
</reference>
<reference key="8">
    <citation type="journal article" date="2003" name="Nature">
        <title>Global analysis of protein expression in yeast.</title>
        <authorList>
            <person name="Ghaemmaghami S."/>
            <person name="Huh W.-K."/>
            <person name="Bower K."/>
            <person name="Howson R.W."/>
            <person name="Belle A."/>
            <person name="Dephoure N."/>
            <person name="O'Shea E.K."/>
            <person name="Weissman J.S."/>
        </authorList>
    </citation>
    <scope>LEVEL OF PROTEIN EXPRESSION [LARGE SCALE ANALYSIS]</scope>
</reference>
<reference key="9">
    <citation type="journal article" date="2008" name="Biochem. Biophys. Res. Commun.">
        <title>Novel Ree1 regulates the expression of ENO1 via the Snf1 complex pathway in Saccharomyces cerevisiae.</title>
        <authorList>
            <person name="Choi I.D."/>
            <person name="Jeong M.Y."/>
            <person name="Ham M.S."/>
            <person name="Sung H.C."/>
            <person name="Yun C.W."/>
        </authorList>
    </citation>
    <scope>INDUCTION</scope>
    <scope>INTERACTION WITH GAL83</scope>
    <scope>FUNCTION</scope>
</reference>
<reference key="10">
    <citation type="submission" date="2010-09" db="PDB data bank">
        <title>The crystal structure of a functionally unknown protein from saccharomyces cerevisiae.</title>
        <authorList>
            <consortium name="Midwest center for structural genomics (MCSG)"/>
        </authorList>
    </citation>
    <scope>X-RAY CRYSTALLOGRAPHY (1.5 ANGSTROMS)</scope>
</reference>
<comment type="function">
    <text evidence="5">Functions in the galactose metabolic pathway via the GAL83 protein and that it may control the level of ENO1.</text>
</comment>
<comment type="subcellular location">
    <subcellularLocation>
        <location evidence="3">Cytoplasm</location>
    </subcellularLocation>
</comment>
<comment type="induction">
    <text evidence="1 2 5">By calcium shortage, copper deficiency (via MAC1) and the presence of galactose (via GAL4).</text>
</comment>
<comment type="miscellaneous">
    <text evidence="4">Present with 721 molecules/cell in log phase SD medium.</text>
</comment>
<accession>P40893</accession>
<accession>D6VVX9</accession>
<sequence length="198" mass="21967">MVESKNTELSQGTWLNKPKSVFQEAGKVTLETDEKTDFWRETFYGFTRDSGHFLGVETGSAFTAQVRVQGSYESLYDQAGIMVRIDDGHWLKAGIEISDGHAMLSSVLTNGKSDWSTAVYGGNARDFWLRVTVEKGVLRIQVSSDKKTWPLVRLAPFPTSDHYLVGPMACTPERGGLKVTFSEWSLTAPLGKALHDLS</sequence>
<evidence type="ECO:0000269" key="1">
    <source>
    </source>
</evidence>
<evidence type="ECO:0000269" key="2">
    <source>
    </source>
</evidence>
<evidence type="ECO:0000269" key="3">
    <source>
    </source>
</evidence>
<evidence type="ECO:0000269" key="4">
    <source>
    </source>
</evidence>
<evidence type="ECO:0000269" key="5">
    <source>
    </source>
</evidence>
<evidence type="ECO:0007829" key="6">
    <source>
        <dbReference type="PDB" id="3O12"/>
    </source>
</evidence>
<feature type="chain" id="PRO_0000203011" description="Regulation of enolase protein 1">
    <location>
        <begin position="1"/>
        <end position="198"/>
    </location>
</feature>
<feature type="helix" evidence="6">
    <location>
        <begin position="9"/>
        <end position="11"/>
    </location>
</feature>
<feature type="strand" evidence="6">
    <location>
        <begin position="13"/>
        <end position="16"/>
    </location>
</feature>
<feature type="strand" evidence="6">
    <location>
        <begin position="19"/>
        <end position="24"/>
    </location>
</feature>
<feature type="strand" evidence="6">
    <location>
        <begin position="27"/>
        <end position="31"/>
    </location>
</feature>
<feature type="strand" evidence="6">
    <location>
        <begin position="38"/>
        <end position="41"/>
    </location>
</feature>
<feature type="turn" evidence="6">
    <location>
        <begin position="42"/>
        <end position="44"/>
    </location>
</feature>
<feature type="strand" evidence="6">
    <location>
        <begin position="47"/>
        <end position="49"/>
    </location>
</feature>
<feature type="strand" evidence="6">
    <location>
        <begin position="51"/>
        <end position="57"/>
    </location>
</feature>
<feature type="strand" evidence="6">
    <location>
        <begin position="60"/>
        <end position="70"/>
    </location>
</feature>
<feature type="strand" evidence="6">
    <location>
        <begin position="78"/>
        <end position="86"/>
    </location>
</feature>
<feature type="strand" evidence="6">
    <location>
        <begin position="89"/>
        <end position="98"/>
    </location>
</feature>
<feature type="strand" evidence="6">
    <location>
        <begin position="101"/>
        <end position="119"/>
    </location>
</feature>
<feature type="strand" evidence="6">
    <location>
        <begin position="126"/>
        <end position="134"/>
    </location>
</feature>
<feature type="strand" evidence="6">
    <location>
        <begin position="137"/>
        <end position="147"/>
    </location>
</feature>
<feature type="strand" evidence="6">
    <location>
        <begin position="151"/>
        <end position="156"/>
    </location>
</feature>
<feature type="strand" evidence="6">
    <location>
        <begin position="164"/>
        <end position="170"/>
    </location>
</feature>
<feature type="strand" evidence="6">
    <location>
        <begin position="172"/>
        <end position="174"/>
    </location>
</feature>
<feature type="strand" evidence="6">
    <location>
        <begin position="178"/>
        <end position="187"/>
    </location>
</feature>
<protein>
    <recommendedName>
        <fullName>Regulation of enolase protein 1</fullName>
    </recommendedName>
</protein>